<feature type="chain" id="PRO_0000093428" description="Cystic fibrosis transmembrane conductance regulator">
    <location>
        <begin position="1"/>
        <end position="1476"/>
    </location>
</feature>
<feature type="topological domain" description="Cytoplasmic" evidence="1">
    <location>
        <begin position="1"/>
        <end position="77"/>
    </location>
</feature>
<feature type="transmembrane region" description="Helical; Name=1" evidence="1">
    <location>
        <begin position="78"/>
        <end position="98"/>
    </location>
</feature>
<feature type="topological domain" description="Extracellular" evidence="1">
    <location>
        <begin position="99"/>
        <end position="122"/>
    </location>
</feature>
<feature type="transmembrane region" description="Helical; Name=2" evidence="1">
    <location>
        <begin position="123"/>
        <end position="146"/>
    </location>
</feature>
<feature type="topological domain" description="Cytoplasmic" evidence="1">
    <location>
        <begin position="147"/>
        <end position="195"/>
    </location>
</feature>
<feature type="transmembrane region" description="Helical; Name=3" evidence="1">
    <location>
        <begin position="196"/>
        <end position="216"/>
    </location>
</feature>
<feature type="topological domain" description="Extracellular" evidence="1">
    <location>
        <begin position="217"/>
        <end position="222"/>
    </location>
</feature>
<feature type="transmembrane region" description="Helical; Name=4" evidence="1">
    <location>
        <begin position="223"/>
        <end position="243"/>
    </location>
</feature>
<feature type="topological domain" description="Cytoplasmic" evidence="1">
    <location>
        <begin position="244"/>
        <end position="298"/>
    </location>
</feature>
<feature type="transmembrane region" description="Helical; Name=5" evidence="1">
    <location>
        <begin position="299"/>
        <end position="319"/>
    </location>
</feature>
<feature type="topological domain" description="Extracellular" evidence="1">
    <location>
        <begin position="320"/>
        <end position="339"/>
    </location>
</feature>
<feature type="transmembrane region" description="Helical; Name=6" evidence="1">
    <location>
        <begin position="340"/>
        <end position="358"/>
    </location>
</feature>
<feature type="topological domain" description="Cytoplasmic" evidence="1">
    <location>
        <begin position="359"/>
        <end position="853"/>
    </location>
</feature>
<feature type="transmembrane region" description="Helical; Name=7" evidence="1">
    <location>
        <begin position="854"/>
        <end position="874"/>
    </location>
</feature>
<feature type="topological domain" description="Extracellular" evidence="1">
    <location>
        <begin position="875"/>
        <end position="913"/>
    </location>
</feature>
<feature type="transmembrane region" description="Discontinuously helical; Name=8" evidence="1">
    <location>
        <begin position="914"/>
        <end position="934"/>
    </location>
</feature>
<feature type="topological domain" description="Cytoplasmic" evidence="1">
    <location>
        <begin position="935"/>
        <end position="985"/>
    </location>
</feature>
<feature type="transmembrane region" description="Helical; Name=9" evidence="1">
    <location>
        <begin position="986"/>
        <end position="1006"/>
    </location>
</feature>
<feature type="topological domain" description="Extracellular" evidence="1">
    <location>
        <begin position="1007"/>
        <end position="1008"/>
    </location>
</feature>
<feature type="transmembrane region" description="Helical; Name=10" evidence="1">
    <location>
        <begin position="1009"/>
        <end position="1029"/>
    </location>
</feature>
<feature type="topological domain" description="Cytoplasmic" evidence="1">
    <location>
        <begin position="1030"/>
        <end position="1090"/>
    </location>
</feature>
<feature type="transmembrane region" description="Helical; Name=11" evidence="1">
    <location>
        <begin position="1091"/>
        <end position="1111"/>
    </location>
</feature>
<feature type="topological domain" description="Extracellular" evidence="1">
    <location>
        <begin position="1112"/>
        <end position="1125"/>
    </location>
</feature>
<feature type="transmembrane region" description="Helical; Name=12" evidence="1">
    <location>
        <begin position="1126"/>
        <end position="1146"/>
    </location>
</feature>
<feature type="topological domain" description="Cytoplasmic" evidence="1">
    <location>
        <begin position="1147"/>
        <end position="1476"/>
    </location>
</feature>
<feature type="domain" description="ABC transmembrane type-1 1" evidence="5">
    <location>
        <begin position="81"/>
        <end position="365"/>
    </location>
</feature>
<feature type="domain" description="ABC transporter 1" evidence="4">
    <location>
        <begin position="412"/>
        <end position="646"/>
    </location>
</feature>
<feature type="domain" description="ABC transmembrane type-1 2" evidence="5">
    <location>
        <begin position="854"/>
        <end position="1153"/>
    </location>
</feature>
<feature type="domain" description="ABC transporter 2" evidence="4">
    <location>
        <begin position="1208"/>
        <end position="1439"/>
    </location>
</feature>
<feature type="region of interest" description="Disordered R region" evidence="1">
    <location>
        <begin position="654"/>
        <end position="826"/>
    </location>
</feature>
<feature type="region of interest" description="Interaction with GORASP2" evidence="1">
    <location>
        <begin position="1382"/>
        <end position="1476"/>
    </location>
</feature>
<feature type="region of interest" description="Disordered" evidence="6">
    <location>
        <begin position="1445"/>
        <end position="1476"/>
    </location>
</feature>
<feature type="short sequence motif" description="PDZ-binding" evidence="7">
    <location>
        <begin position="1474"/>
        <end position="1476"/>
    </location>
</feature>
<feature type="compositionally biased region" description="Basic residues" evidence="6">
    <location>
        <begin position="1445"/>
        <end position="1456"/>
    </location>
</feature>
<feature type="compositionally biased region" description="Acidic residues" evidence="6">
    <location>
        <begin position="1466"/>
        <end position="1476"/>
    </location>
</feature>
<feature type="binding site" evidence="1">
    <location>
        <position position="401"/>
    </location>
    <ligand>
        <name>ATP</name>
        <dbReference type="ChEBI" id="CHEBI:30616"/>
        <label>1</label>
    </ligand>
</feature>
<feature type="binding site" evidence="2 4">
    <location>
        <begin position="458"/>
        <end position="465"/>
    </location>
    <ligand>
        <name>ATP</name>
        <dbReference type="ChEBI" id="CHEBI:30616"/>
        <label>1</label>
    </ligand>
</feature>
<feature type="binding site" evidence="4">
    <location>
        <begin position="458"/>
        <end position="465"/>
    </location>
    <ligand>
        <name>ATP</name>
        <dbReference type="ChEBI" id="CHEBI:30616"/>
    </ligand>
</feature>
<feature type="binding site" evidence="2">
    <location>
        <position position="493"/>
    </location>
    <ligand>
        <name>ATP</name>
        <dbReference type="ChEBI" id="CHEBI:30616"/>
        <label>1</label>
    </ligand>
</feature>
<feature type="binding site" evidence="1">
    <location>
        <position position="1215"/>
    </location>
    <ligand>
        <name>ATP</name>
        <dbReference type="ChEBI" id="CHEBI:30616"/>
        <label>2</label>
    </ligand>
</feature>
<feature type="binding site" evidence="4">
    <location>
        <begin position="1240"/>
        <end position="1247"/>
    </location>
    <ligand>
        <name>ATP</name>
        <dbReference type="ChEBI" id="CHEBI:30616"/>
        <label>2</label>
    </ligand>
</feature>
<feature type="binding site" evidence="4">
    <location>
        <begin position="1240"/>
        <end position="1247"/>
    </location>
    <ligand>
        <name>ATP</name>
        <dbReference type="ChEBI" id="CHEBI:30616"/>
    </ligand>
</feature>
<feature type="modified residue" description="Phosphoserine" evidence="1">
    <location>
        <position position="549"/>
    </location>
</feature>
<feature type="modified residue" description="Phosphoserine" evidence="1">
    <location>
        <position position="660"/>
    </location>
</feature>
<feature type="modified residue" description="Phosphoserine; by PKA" evidence="1">
    <location>
        <position position="670"/>
    </location>
</feature>
<feature type="modified residue" description="Phosphoserine" evidence="1">
    <location>
        <position position="684"/>
    </location>
</feature>
<feature type="modified residue" description="Phosphoserine" evidence="1">
    <location>
        <position position="698"/>
    </location>
</feature>
<feature type="modified residue" description="Phosphoserine" evidence="1">
    <location>
        <position position="710"/>
    </location>
</feature>
<feature type="modified residue" description="Phosphothreonine" evidence="1">
    <location>
        <position position="715"/>
    </location>
</feature>
<feature type="modified residue" description="Phosphoserine" evidence="1">
    <location>
        <position position="732"/>
    </location>
</feature>
<feature type="modified residue" description="Phosphoserine" evidence="1">
    <location>
        <position position="763"/>
    </location>
</feature>
<feature type="modified residue" description="Phosphoserine" evidence="1">
    <location>
        <position position="785"/>
    </location>
</feature>
<feature type="modified residue" description="Phosphoserine" evidence="1">
    <location>
        <position position="790"/>
    </location>
</feature>
<feature type="modified residue" description="Phosphoserine" evidence="14">
    <location>
        <position position="808"/>
    </location>
</feature>
<feature type="modified residue" description="Phosphoserine" evidence="1">
    <location>
        <position position="1440"/>
    </location>
</feature>
<feature type="modified residue" description="Phosphoserine" evidence="1">
    <location>
        <position position="1452"/>
    </location>
</feature>
<feature type="lipid moiety-binding region" description="S-palmitoyl cysteine" evidence="1">
    <location>
        <position position="524"/>
    </location>
</feature>
<feature type="lipid moiety-binding region" description="S-palmitoyl cysteine" evidence="1">
    <location>
        <position position="1391"/>
    </location>
</feature>
<feature type="glycosylation site" description="N-linked (GlcNAc...) asparagine" evidence="3">
    <location>
        <position position="889"/>
    </location>
</feature>
<feature type="glycosylation site" description="N-linked (GlcNAc...) asparagine" evidence="3">
    <location>
        <position position="895"/>
    </location>
</feature>
<feature type="sequence conflict" description="In Ref. 3; AAA40918." evidence="12" ref="3">
    <original>FD</original>
    <variation>LT</variation>
    <location>
        <begin position="987"/>
        <end position="988"/>
    </location>
</feature>
<protein>
    <recommendedName>
        <fullName evidence="12">Cystic fibrosis transmembrane conductance regulator</fullName>
        <shortName>CFTR</shortName>
    </recommendedName>
    <alternativeName>
        <fullName>ATP-binding cassette sub-family C member 7</fullName>
    </alternativeName>
    <alternativeName>
        <fullName>Channel conductance-controlling ATPase</fullName>
        <ecNumber evidence="1">5.6.1.6</ecNumber>
    </alternativeName>
    <alternativeName>
        <fullName>cAMP-dependent chloride channel</fullName>
    </alternativeName>
</protein>
<accession>P34158</accession>
<accession>Q2IBD3</accession>
<name>CFTR_RAT</name>
<keyword id="KW-0067">ATP-binding</keyword>
<keyword id="KW-1003">Cell membrane</keyword>
<keyword id="KW-0868">Chloride</keyword>
<keyword id="KW-0869">Chloride channel</keyword>
<keyword id="KW-0256">Endoplasmic reticulum</keyword>
<keyword id="KW-0967">Endosome</keyword>
<keyword id="KW-0325">Glycoprotein</keyword>
<keyword id="KW-0407">Ion channel</keyword>
<keyword id="KW-0406">Ion transport</keyword>
<keyword id="KW-0413">Isomerase</keyword>
<keyword id="KW-0449">Lipoprotein</keyword>
<keyword id="KW-0472">Membrane</keyword>
<keyword id="KW-0547">Nucleotide-binding</keyword>
<keyword id="KW-0539">Nucleus</keyword>
<keyword id="KW-0564">Palmitate</keyword>
<keyword id="KW-0597">Phosphoprotein</keyword>
<keyword id="KW-1185">Reference proteome</keyword>
<keyword id="KW-0677">Repeat</keyword>
<keyword id="KW-0812">Transmembrane</keyword>
<keyword id="KW-1133">Transmembrane helix</keyword>
<keyword id="KW-0813">Transport</keyword>
<keyword id="KW-0832">Ubl conjugation</keyword>
<proteinExistence type="evidence at protein level"/>
<reference key="1">
    <citation type="journal article" date="2003" name="Nature">
        <title>Comparative analyses of multi-species sequences from targeted genomic regions.</title>
        <authorList>
            <person name="Thomas J.W."/>
            <person name="Touchman J.W."/>
            <person name="Blakesley R.W."/>
            <person name="Bouffard G.G."/>
            <person name="Beckstrom-Sternberg S.M."/>
            <person name="Margulies E.H."/>
            <person name="Blanchette M."/>
            <person name="Siepel A.C."/>
            <person name="Thomas P.J."/>
            <person name="McDowell J.C."/>
            <person name="Maskeri B."/>
            <person name="Hansen N.F."/>
            <person name="Schwartz M.S."/>
            <person name="Weber R.J."/>
            <person name="Kent W.J."/>
            <person name="Karolchik D."/>
            <person name="Bruen T.C."/>
            <person name="Bevan R."/>
            <person name="Cutler D.J."/>
            <person name="Schwartz S."/>
            <person name="Elnitski L."/>
            <person name="Idol J.R."/>
            <person name="Prasad A.B."/>
            <person name="Lee-Lin S.-Q."/>
            <person name="Maduro V.V.B."/>
            <person name="Summers T.J."/>
            <person name="Portnoy M.E."/>
            <person name="Dietrich N.L."/>
            <person name="Akhter N."/>
            <person name="Ayele K."/>
            <person name="Benjamin B."/>
            <person name="Cariaga K."/>
            <person name="Brinkley C.P."/>
            <person name="Brooks S.Y."/>
            <person name="Granite S."/>
            <person name="Guan X."/>
            <person name="Gupta J."/>
            <person name="Haghighi P."/>
            <person name="Ho S.-L."/>
            <person name="Huang M.C."/>
            <person name="Karlins E."/>
            <person name="Laric P.L."/>
            <person name="Legaspi R."/>
            <person name="Lim M.J."/>
            <person name="Maduro Q.L."/>
            <person name="Masiello C.A."/>
            <person name="Mastrian S.D."/>
            <person name="McCloskey J.C."/>
            <person name="Pearson R."/>
            <person name="Stantripop S."/>
            <person name="Tiongson E.E."/>
            <person name="Tran J.T."/>
            <person name="Tsurgeon C."/>
            <person name="Vogt J.L."/>
            <person name="Walker M.A."/>
            <person name="Wetherby K.D."/>
            <person name="Wiggins L.S."/>
            <person name="Young A.C."/>
            <person name="Zhang L.-H."/>
            <person name="Osoegawa K."/>
            <person name="Zhu B."/>
            <person name="Zhao B."/>
            <person name="Shu C.L."/>
            <person name="De Jong P.J."/>
            <person name="Lawrence C.E."/>
            <person name="Smit A.F."/>
            <person name="Chakravarti A."/>
            <person name="Haussler D."/>
            <person name="Green P."/>
            <person name="Miller W."/>
            <person name="Green E.D."/>
        </authorList>
    </citation>
    <scope>NUCLEOTIDE SEQUENCE [LARGE SCALE GENOMIC DNA]</scope>
</reference>
<reference key="2">
    <citation type="journal article" date="1994" name="Hum. Mol. Genet.">
        <title>Analysis of the mouse and rat CFTR promoter regions.</title>
        <authorList>
            <person name="Denamur E."/>
            <person name="Chehab F.F."/>
        </authorList>
    </citation>
    <scope>NUCLEOTIDE SEQUENCE [GENOMIC DNA] OF 1-17</scope>
</reference>
<reference key="3">
    <citation type="journal article" date="1992" name="Genomics">
        <title>Localization of the gene encoding the cystic fibrosis transmembrane conductance regulator (CFTR) in the rat to chromosome 4 and implications for the evolution of mammalian chromosomes.</title>
        <authorList>
            <person name="Trezise A.E."/>
            <person name="Szpirer C."/>
            <person name="Buchwald M."/>
        </authorList>
    </citation>
    <scope>NUCLEOTIDE SEQUENCE [MRNA] OF 482-988</scope>
</reference>
<reference key="4">
    <citation type="journal article" date="2002" name="J. Biol. Chem.">
        <title>A Golgi-associated PDZ domain protein modulates cystic fibrosis transmembrane regulator plasma membrane expression.</title>
        <authorList>
            <person name="Cheng J."/>
            <person name="Moyer B.D."/>
            <person name="Milewski M."/>
            <person name="Loffing J."/>
            <person name="Ikeda M."/>
            <person name="Mickle J.E."/>
            <person name="Cutting G.R."/>
            <person name="Li M."/>
            <person name="Stanton B.A."/>
            <person name="Guggino W.B."/>
        </authorList>
    </citation>
    <scope>INTERACTION WITH GOPC</scope>
</reference>
<reference key="5">
    <citation type="journal article" date="2003" name="Am. J. Physiol.">
        <title>Physiological modulation of CFTR activity by AMP-activated protein kinase in polarized T84 cells.</title>
        <authorList>
            <person name="Hallows K.R."/>
            <person name="Kobinger G.P."/>
            <person name="Wilson J.M."/>
            <person name="Witters L.A."/>
            <person name="Foskett J.K."/>
        </authorList>
    </citation>
    <scope>SUBCELLULAR LOCATION</scope>
    <scope>TISSUE SPECIFICITY</scope>
</reference>
<reference key="6">
    <citation type="journal article" date="2004" name="J. Biol. Chem.">
        <title>Inhibitory regulation of cystic fibrosis transmembrane conductance regulator anion-transporting activities by Shank2.</title>
        <authorList>
            <person name="Kim J.Y."/>
            <person name="Han W."/>
            <person name="Namkung W."/>
            <person name="Lee J.H."/>
            <person name="Kim K.H."/>
            <person name="Shin H."/>
            <person name="Kim E."/>
            <person name="Lee M.G."/>
        </authorList>
    </citation>
    <scope>INTERACTION WITH SHANK2</scope>
</reference>
<reference key="7">
    <citation type="journal article" date="2012" name="Nat. Commun.">
        <title>Quantitative maps of protein phosphorylation sites across 14 different rat organs and tissues.</title>
        <authorList>
            <person name="Lundby A."/>
            <person name="Secher A."/>
            <person name="Lage K."/>
            <person name="Nordsborg N.B."/>
            <person name="Dmytriyev A."/>
            <person name="Lundby C."/>
            <person name="Olsen J.V."/>
        </authorList>
    </citation>
    <scope>PHOSPHORYLATION [LARGE SCALE ANALYSIS] AT SER-808</scope>
    <scope>IDENTIFICATION BY MASS SPECTROMETRY [LARGE SCALE ANALYSIS]</scope>
</reference>
<reference key="8">
    <citation type="journal article" date="2018" name="J. Mol. Histol.">
        <title>Localization of epithelial sodium channel (ENaC) and CFTR in the germinal epithelium of the testis, Sertoli cells, and spermatozoa.</title>
        <authorList>
            <person name="Sharma S."/>
            <person name="Hanukoglu A."/>
            <person name="Hanukoglu I."/>
        </authorList>
    </citation>
    <scope>SUBCELLULAR LOCATION</scope>
</reference>
<reference key="9">
    <citation type="journal article" date="2019" name="J. Mol. Histol.">
        <title>Mapping the sites of localization of epithelial sodium channel (ENaC) and CFTR in segments of the mammalian epididymis.</title>
        <authorList>
            <person name="Sharma S."/>
            <person name="Hanukoglu I."/>
        </authorList>
    </citation>
    <scope>TISSUE SPECIFICITY</scope>
</reference>
<sequence>MQKSPLEKASFISKLFFSWTTPILRKGYRHHLELSDIYQAPSSDSADHLSEKLEREWDREQASKKKPQLIHALRRCFVWRFVFYGVLLYLGEVTKAVQPVLLGRIIASYDPDNTEERSIAIYLGIGLCLLFIVRTLLLHPAIFGLHHIGMQMRIAMFSLIYKKTLKLSSRVLDKISIGQLISLLSNNLNKFDEGLALAHFIWIAPLQVVLLMGLLWDLLQFSAFCGLGLLIVLVIFQAILGKMMVKYRDKRAAKINERLVITSEVIDNIYSVKAYCWESAMEKIIESLREEELKMTRRSAYMRFFTSSAFFFSGFFVVFLSVLPYTVINGIVLRKIFTTISFCIVLRMSVTRQFPTAVQIWYDSLGMIRKIQDFLQTQEYKVLEYNLMFTGLVMENVTAFWEEGFQELLEKVQLNNDDRKTSNGENHLSFSHLCLVGNPVLKNINLNIKKGEMLAITGSTGAGKTSLLMLILGELEASEGIIKHSGRVSFSSQISWIMPGTIKENIIFGVSYDEYRYKSVVKACQLQEDITKFAEQDNTVLGEGGVTLSGGQRARISLARAVYKDADLYLLDSPFGYLDVLTEEQIFESCVCKLMASKTRILVTSKMEQLKKADKILILHEGSSYFYGTFSELQSLRPDFSSKLMGYDTFDQFTEERRSSILTETLRRFSVDDASTTWNKAKQSFRQTGEFGEKRKNSILSSFSSVKKISIVQKTPLSIEGESDDLQERRLSLVPDSEHGEAALPRSNMITAGPTFPGRRRQSVLDLMTFTPSSVSSSLQRTRASIRKISLAPRISLKEEDIYSRRLSQDSTLNITEEINEEDLKECFFDDMVKIPTVTTWNTYLRYFTLHRGLFAVLIWCVLVFLVEVAASLFVLWLLKNNPVNGGNNGTKIANTSYVVVITSSSFYYIFYIYVGVADTLLALSLFRGLPLVHTLITASKILHRKMLHSILHAPMSTFNKLKAGGILNRFSKDIAILDDFLPLTIFDFIQLLFIVVGAIIVVSALQPYIFLATVPGLAVFILLRAYFLHTSQQLKQLESEGRSPIFTHLVTSLKGLWTLRAFRRQTYFETLFHKALNLHTANWFMYLATLRWFQMRIDMIFVLFFIVVTFISILTTGEGEGTTGIILTLAMNIMSTLQWAVNSSIDTDSLMRSVSRVFKFIDIQTEESICTKIMKELHSEDSPNALVIKNEHVKKCDTWPSGGEMVVKDLTVKYVDDGNAILENISFSISPGQRVGLLGRTGSGKSTLLSAFLRMLNIKGEIQIDGVSWNSMTLQEWRKAFGVITQKVFIFSGTFRQNLDPNGKWRDEEIWKVADQVGLKSVIEQFPGQLNFTLVDGGYVLSHGHKQLMCLARSVLSKAKIILLDEPSANLDPITYQVIRRVLRQAFAGCTVVLCEHRIEAMLDCQRFLVIEQGNVWQYESLQALLSEKSVFQRALSSSEKMKLFHGRHSSKQKPRTQITAVKEETEEEVQETRL</sequence>
<comment type="function">
    <text evidence="1 2">Epithelial ion channel that plays an important role in the regulation of epithelial ion and water transport and fluid homeostasis. Mediates the transport of chloride ions across the cell membrane (By similarity). Possesses an intrinsic ATPase activity and utilizes ATP to gate its channel; the passive flow of anions through the channel is gated by cycles of ATP binding and hydrolysis by the ATP-binding domains (By similarity). The ion channel is also permeable to HCO(3)(-); selectivity depends on the extracellular chloride concentration. Exerts its function also by modulating the activity of other ion channels and transporters. Contributes to the regulation of the pH and the ion content of the epithelial fluid layer. Modulates the activity of the epithelial sodium channel (ENaC) complex, in part by regulating the cell surface expression of the ENaC complex. May regulate bicarbonate secretion and salvage in epithelial cells by regulating the transporter SLC4A7. Can inhibit the chloride channel activity of ANO1 (By similarity). Plays a role in the chloride and bicarbonate homeostasis during sperm epididymal maturation and capacitation (By similarity).</text>
</comment>
<comment type="catalytic activity">
    <reaction evidence="1">
        <text>ATP + H2O + closed Cl(-) channel = ADP + phosphate + open Cl(-) channel.</text>
        <dbReference type="EC" id="5.6.1.6"/>
    </reaction>
</comment>
<comment type="catalytic activity">
    <reaction evidence="1">
        <text>chloride(in) = chloride(out)</text>
        <dbReference type="Rhea" id="RHEA:29823"/>
        <dbReference type="ChEBI" id="CHEBI:17996"/>
    </reaction>
</comment>
<comment type="catalytic activity">
    <reaction evidence="1">
        <text>hydrogencarbonate(in) = hydrogencarbonate(out)</text>
        <dbReference type="Rhea" id="RHEA:28695"/>
        <dbReference type="ChEBI" id="CHEBI:17544"/>
    </reaction>
</comment>
<comment type="catalytic activity">
    <reaction evidence="1">
        <text>ATP + H2O = ADP + phosphate + H(+)</text>
        <dbReference type="Rhea" id="RHEA:13065"/>
        <dbReference type="ChEBI" id="CHEBI:15377"/>
        <dbReference type="ChEBI" id="CHEBI:15378"/>
        <dbReference type="ChEBI" id="CHEBI:30616"/>
        <dbReference type="ChEBI" id="CHEBI:43474"/>
        <dbReference type="ChEBI" id="CHEBI:456216"/>
    </reaction>
    <physiologicalReaction direction="left-to-right" evidence="1">
        <dbReference type="Rhea" id="RHEA:13066"/>
    </physiologicalReaction>
</comment>
<comment type="subunit">
    <text evidence="1 2 7 9">Monomer; does not require oligomerization for channel activity. May form oligomers in the membrane (By similarity). Interacts with SLC4A7 through NHERF1 (By similarity). Interacts with SHANK2 (PubMed:14679199). Interacts with NHERF1 and MYO6. Interacts (via C-terminus) with GOPC (via PDZ domain); this promotes CFTR internalization and thereby decreases channel activity (PubMed:11707463). Interacts with SLC4A7 through NHERF1. Found in a complex with MYO5B and RAB11A. Interacts with ANO1. Interacts with SLC26A8 (By similarity). Interacts with AHCYL1; the interaction increases CFTR activity (By similarity). Interacts with CSE1L (By similarity). The core-glycosylated form interacts with GORASP2 (via PDZ GRASP-type 1 domain) in respone to ER stress (By similarity). Interacts with MARCHF2; the interaction leads to CFTR ubiqtuitination and degradation (By similarity). Interacts with ADGRG2 (By similarity).</text>
</comment>
<comment type="subcellular location">
    <subcellularLocation>
        <location evidence="2">Apical cell membrane</location>
        <topology evidence="1">Multi-pass membrane protein</topology>
    </subcellularLocation>
    <subcellularLocation>
        <location evidence="1">Early endosome membrane</location>
        <topology evidence="1">Multi-pass membrane protein</topology>
    </subcellularLocation>
    <subcellularLocation>
        <location evidence="2">Cell membrane</location>
        <topology evidence="1">Multi-pass membrane protein</topology>
    </subcellularLocation>
    <subcellularLocation>
        <location evidence="1">Recycling endosome membrane</location>
        <topology evidence="1">Multi-pass membrane protein</topology>
    </subcellularLocation>
    <subcellularLocation>
        <location evidence="1">Endoplasmic reticulum membrane</location>
        <topology evidence="1">Multi-pass membrane protein</topology>
    </subcellularLocation>
    <subcellularLocation>
        <location evidence="10">Nucleus</location>
    </subcellularLocation>
    <text evidence="1 10">The channel is internalized from the cell surface into an endosomal recycling compartment, from where it is recycled to the cell membrane (By similarity). In the oviduct and bronchus, detected on the apical side of epithelial cells, but not associated with cilia (By similarity). In Sertoli cells, a processed product is detected in the nucleus (PubMed:29453757). ER stress induces GORASP2-mediated unconventional (ER/Golgi-independent) trafficking of core-glycosylated CFTR to cell membrane (By similarity).</text>
</comment>
<comment type="tissue specificity">
    <text evidence="8 11">Detected in epithelial cells in nasopharynx, submandibular gland, pancreas and ileum (at protein level) (PubMed:12519745). Expressed in the epididymis (PubMed:30659401). In the caput section of the epididymis, expressed uniformly on both the luminal and basolateral sides of the ducts and on sperm in the caput lumen (at protein level) (PubMed:30659401). In the cauda, detected along the luminal border but not continuously and is also expressed on the basolateral surface (PubMed:30659401). Within the caudal lumen, detected on sperm (PubMed:30659401).</text>
</comment>
<comment type="domain">
    <text evidence="1 2">Binds and hydrolyzes ATP via the two cytoplasmic ABC transporter nucleotide-binding domains. The two ATP-binding domains interact with each other, forming a head-to-tail dimer. Normal ATPase activity requires interaction between the two domains. The first ABC transporter nucleotide-binding domain has no ATPase activity by itself.</text>
</comment>
<comment type="domain">
    <text evidence="1">The PDZ-binding motif mediates interactions with GOPC and with the SLC4A7, NHERF1/EBP50 complex.</text>
</comment>
<comment type="domain">
    <text evidence="1">The disordered R region mediates channel activation when it is phosphorylated, but not in the absence of phosphorylation.</text>
</comment>
<comment type="PTM">
    <text evidence="1">N-glycosylated.</text>
</comment>
<comment type="PTM">
    <text evidence="1">Phosphorylated; cAMP treatment promotes phosphorylation and activates the channel. Dephosphorylation decreases the ATPase activity (in vitro). Phosphorylation at PKA sites activates the channel. Phosphorylation at PKC sites enhances the response to phosphorylation by PKA. Phosphorylated by AMPK; this inhibits channel activity.</text>
</comment>
<comment type="PTM">
    <text evidence="1">Ubiquitinated, leading to its degradation in the lysosome. Deubiquitination by USP10 in early endosomes enhances its endocytic recycling to the cell membrane. Ubiquitinated by RNF185 during ER stress. Ubiquitinated by MARCHF2 (By similarity).</text>
</comment>
<comment type="similarity">
    <text evidence="12">Belongs to the ABC transporter superfamily. ABCC family. CFTR transporter (TC 3.A.1.202) subfamily.</text>
</comment>
<dbReference type="EC" id="5.6.1.6" evidence="1"/>
<dbReference type="EMBL" id="DP000027">
    <property type="protein sequence ID" value="AAR16315.1"/>
    <property type="molecule type" value="Genomic_DNA"/>
</dbReference>
<dbReference type="EMBL" id="L26098">
    <property type="protein sequence ID" value="AAA73561.1"/>
    <property type="molecule type" value="Genomic_DNA"/>
</dbReference>
<dbReference type="EMBL" id="M89906">
    <property type="protein sequence ID" value="AAA40918.1"/>
    <property type="molecule type" value="mRNA"/>
</dbReference>
<dbReference type="PIR" id="I84733">
    <property type="entry name" value="I84733"/>
</dbReference>
<dbReference type="RefSeq" id="NP_113694.1">
    <property type="nucleotide sequence ID" value="NM_031506.1"/>
</dbReference>
<dbReference type="RefSeq" id="XP_038962935.1">
    <property type="nucleotide sequence ID" value="XM_039107007.2"/>
</dbReference>
<dbReference type="SMR" id="P34158"/>
<dbReference type="BioGRID" id="246440">
    <property type="interactions" value="3"/>
</dbReference>
<dbReference type="FunCoup" id="P34158">
    <property type="interactions" value="282"/>
</dbReference>
<dbReference type="IntAct" id="P34158">
    <property type="interactions" value="1"/>
</dbReference>
<dbReference type="MINT" id="P34158"/>
<dbReference type="STRING" id="10116.ENSRNOP00000072565"/>
<dbReference type="BindingDB" id="P34158"/>
<dbReference type="ChEMBL" id="CHEMBL3992"/>
<dbReference type="GlyCosmos" id="P34158">
    <property type="glycosylation" value="2 sites, No reported glycans"/>
</dbReference>
<dbReference type="GlyGen" id="P34158">
    <property type="glycosylation" value="2 sites"/>
</dbReference>
<dbReference type="iPTMnet" id="P34158"/>
<dbReference type="PhosphoSitePlus" id="P34158"/>
<dbReference type="PaxDb" id="10116-ENSRNOP00000010981"/>
<dbReference type="GeneID" id="24255"/>
<dbReference type="KEGG" id="rno:24255"/>
<dbReference type="AGR" id="RGD:2332"/>
<dbReference type="CTD" id="1080"/>
<dbReference type="RGD" id="2332">
    <property type="gene designation" value="Cftr"/>
</dbReference>
<dbReference type="eggNOG" id="KOG0054">
    <property type="taxonomic scope" value="Eukaryota"/>
</dbReference>
<dbReference type="InParanoid" id="P34158"/>
<dbReference type="OrthoDB" id="6500128at2759"/>
<dbReference type="PhylomeDB" id="P34158"/>
<dbReference type="TreeFam" id="TF105200"/>
<dbReference type="Reactome" id="R-RNO-382556">
    <property type="pathway name" value="ABC-family proteins mediated transport"/>
</dbReference>
<dbReference type="Reactome" id="R-RNO-5627083">
    <property type="pathway name" value="RHO GTPases regulate CFTR trafficking"/>
</dbReference>
<dbReference type="Reactome" id="R-RNO-5689880">
    <property type="pathway name" value="Ub-specific processing proteases"/>
</dbReference>
<dbReference type="Reactome" id="R-RNO-8856825">
    <property type="pathway name" value="Cargo recognition for clathrin-mediated endocytosis"/>
</dbReference>
<dbReference type="Reactome" id="R-RNO-8856828">
    <property type="pathway name" value="Clathrin-mediated endocytosis"/>
</dbReference>
<dbReference type="Reactome" id="R-RNO-9013406">
    <property type="pathway name" value="RHOQ GTPase cycle"/>
</dbReference>
<dbReference type="Reactome" id="R-RNO-9646399">
    <property type="pathway name" value="Aggrephagy"/>
</dbReference>
<dbReference type="PRO" id="PR:P34158"/>
<dbReference type="Proteomes" id="UP000002494">
    <property type="component" value="Unplaced"/>
</dbReference>
<dbReference type="GO" id="GO:0016324">
    <property type="term" value="C:apical plasma membrane"/>
    <property type="evidence" value="ECO:0000314"/>
    <property type="project" value="RGD"/>
</dbReference>
<dbReference type="GO" id="GO:0016323">
    <property type="term" value="C:basolateral plasma membrane"/>
    <property type="evidence" value="ECO:0000314"/>
    <property type="project" value="RGD"/>
</dbReference>
<dbReference type="GO" id="GO:0009986">
    <property type="term" value="C:cell surface"/>
    <property type="evidence" value="ECO:0000266"/>
    <property type="project" value="RGD"/>
</dbReference>
<dbReference type="GO" id="GO:0034707">
    <property type="term" value="C:chloride channel complex"/>
    <property type="evidence" value="ECO:0007669"/>
    <property type="project" value="UniProtKB-KW"/>
</dbReference>
<dbReference type="GO" id="GO:0005737">
    <property type="term" value="C:cytoplasm"/>
    <property type="evidence" value="ECO:0000266"/>
    <property type="project" value="RGD"/>
</dbReference>
<dbReference type="GO" id="GO:0005829">
    <property type="term" value="C:cytosol"/>
    <property type="evidence" value="ECO:0000266"/>
    <property type="project" value="RGD"/>
</dbReference>
<dbReference type="GO" id="GO:0030425">
    <property type="term" value="C:dendrite"/>
    <property type="evidence" value="ECO:0000314"/>
    <property type="project" value="RGD"/>
</dbReference>
<dbReference type="GO" id="GO:0005769">
    <property type="term" value="C:early endosome"/>
    <property type="evidence" value="ECO:0000314"/>
    <property type="project" value="RGD"/>
</dbReference>
<dbReference type="GO" id="GO:0031901">
    <property type="term" value="C:early endosome membrane"/>
    <property type="evidence" value="ECO:0007669"/>
    <property type="project" value="UniProtKB-SubCell"/>
</dbReference>
<dbReference type="GO" id="GO:0005789">
    <property type="term" value="C:endoplasmic reticulum membrane"/>
    <property type="evidence" value="ECO:0000250"/>
    <property type="project" value="UniProtKB"/>
</dbReference>
<dbReference type="GO" id="GO:0016020">
    <property type="term" value="C:membrane"/>
    <property type="evidence" value="ECO:0000250"/>
    <property type="project" value="UniProtKB"/>
</dbReference>
<dbReference type="GO" id="GO:0005902">
    <property type="term" value="C:microvillus"/>
    <property type="evidence" value="ECO:0000314"/>
    <property type="project" value="RGD"/>
</dbReference>
<dbReference type="GO" id="GO:0043025">
    <property type="term" value="C:neuronal cell body"/>
    <property type="evidence" value="ECO:0000314"/>
    <property type="project" value="RGD"/>
</dbReference>
<dbReference type="GO" id="GO:0005634">
    <property type="term" value="C:nucleus"/>
    <property type="evidence" value="ECO:0000314"/>
    <property type="project" value="UniProtKB"/>
</dbReference>
<dbReference type="GO" id="GO:0005886">
    <property type="term" value="C:plasma membrane"/>
    <property type="evidence" value="ECO:0000250"/>
    <property type="project" value="UniProtKB"/>
</dbReference>
<dbReference type="GO" id="GO:0032991">
    <property type="term" value="C:protein-containing complex"/>
    <property type="evidence" value="ECO:0000266"/>
    <property type="project" value="RGD"/>
</dbReference>
<dbReference type="GO" id="GO:0055037">
    <property type="term" value="C:recycling endosome"/>
    <property type="evidence" value="ECO:0000266"/>
    <property type="project" value="RGD"/>
</dbReference>
<dbReference type="GO" id="GO:0055038">
    <property type="term" value="C:recycling endosome membrane"/>
    <property type="evidence" value="ECO:0007669"/>
    <property type="project" value="UniProtKB-SubCell"/>
</dbReference>
<dbReference type="GO" id="GO:0071889">
    <property type="term" value="F:14-3-3 protein binding"/>
    <property type="evidence" value="ECO:0000266"/>
    <property type="project" value="RGD"/>
</dbReference>
<dbReference type="GO" id="GO:0140359">
    <property type="term" value="F:ABC-type transporter activity"/>
    <property type="evidence" value="ECO:0007669"/>
    <property type="project" value="InterPro"/>
</dbReference>
<dbReference type="GO" id="GO:0005524">
    <property type="term" value="F:ATP binding"/>
    <property type="evidence" value="ECO:0007669"/>
    <property type="project" value="UniProtKB-KW"/>
</dbReference>
<dbReference type="GO" id="GO:0016887">
    <property type="term" value="F:ATP hydrolysis activity"/>
    <property type="evidence" value="ECO:0000250"/>
    <property type="project" value="UniProtKB"/>
</dbReference>
<dbReference type="GO" id="GO:0042626">
    <property type="term" value="F:ATPase-coupled transmembrane transporter activity"/>
    <property type="evidence" value="ECO:0000318"/>
    <property type="project" value="GO_Central"/>
</dbReference>
<dbReference type="GO" id="GO:0015106">
    <property type="term" value="F:bicarbonate transmembrane transporter activity"/>
    <property type="evidence" value="ECO:0000250"/>
    <property type="project" value="UniProtKB"/>
</dbReference>
<dbReference type="GO" id="GO:0005254">
    <property type="term" value="F:chloride channel activity"/>
    <property type="evidence" value="ECO:0000250"/>
    <property type="project" value="UniProtKB"/>
</dbReference>
<dbReference type="GO" id="GO:0019869">
    <property type="term" value="F:chloride channel inhibitor activity"/>
    <property type="evidence" value="ECO:0000250"/>
    <property type="project" value="UniProtKB"/>
</dbReference>
<dbReference type="GO" id="GO:0015108">
    <property type="term" value="F:chloride transmembrane transporter activity"/>
    <property type="evidence" value="ECO:0000250"/>
    <property type="project" value="UniProtKB"/>
</dbReference>
<dbReference type="GO" id="GO:0019899">
    <property type="term" value="F:enzyme binding"/>
    <property type="evidence" value="ECO:0000266"/>
    <property type="project" value="RGD"/>
</dbReference>
<dbReference type="GO" id="GO:0005260">
    <property type="term" value="F:intracellularly ATP-gated chloride channel activity"/>
    <property type="evidence" value="ECO:0000250"/>
    <property type="project" value="UniProtKB"/>
</dbReference>
<dbReference type="GO" id="GO:0030165">
    <property type="term" value="F:PDZ domain binding"/>
    <property type="evidence" value="ECO:0000266"/>
    <property type="project" value="RGD"/>
</dbReference>
<dbReference type="GO" id="GO:0051087">
    <property type="term" value="F:protein-folding chaperone binding"/>
    <property type="evidence" value="ECO:0000266"/>
    <property type="project" value="RGD"/>
</dbReference>
<dbReference type="GO" id="GO:0106138">
    <property type="term" value="F:Sec61 translocon complex binding"/>
    <property type="evidence" value="ECO:0000266"/>
    <property type="project" value="RGD"/>
</dbReference>
<dbReference type="GO" id="GO:0097186">
    <property type="term" value="P:amelogenesis"/>
    <property type="evidence" value="ECO:0000266"/>
    <property type="project" value="RGD"/>
</dbReference>
<dbReference type="GO" id="GO:0015701">
    <property type="term" value="P:bicarbonate transport"/>
    <property type="evidence" value="ECO:0000315"/>
    <property type="project" value="RGD"/>
</dbReference>
<dbReference type="GO" id="GO:0071454">
    <property type="term" value="P:cellular response to anoxia"/>
    <property type="evidence" value="ECO:0000270"/>
    <property type="project" value="RGD"/>
</dbReference>
<dbReference type="GO" id="GO:0071320">
    <property type="term" value="P:cellular response to cAMP"/>
    <property type="evidence" value="ECO:0000250"/>
    <property type="project" value="UniProtKB"/>
</dbReference>
<dbReference type="GO" id="GO:1904322">
    <property type="term" value="P:cellular response to forskolin"/>
    <property type="evidence" value="ECO:0000250"/>
    <property type="project" value="UniProtKB"/>
</dbReference>
<dbReference type="GO" id="GO:0034605">
    <property type="term" value="P:cellular response to heat"/>
    <property type="evidence" value="ECO:0000270"/>
    <property type="project" value="RGD"/>
</dbReference>
<dbReference type="GO" id="GO:0032870">
    <property type="term" value="P:cellular response to hormone stimulus"/>
    <property type="evidence" value="ECO:0000270"/>
    <property type="project" value="RGD"/>
</dbReference>
<dbReference type="GO" id="GO:1902476">
    <property type="term" value="P:chloride transmembrane transport"/>
    <property type="evidence" value="ECO:0000250"/>
    <property type="project" value="UniProtKB"/>
</dbReference>
<dbReference type="GO" id="GO:0006821">
    <property type="term" value="P:chloride transport"/>
    <property type="evidence" value="ECO:0000315"/>
    <property type="project" value="RGD"/>
</dbReference>
<dbReference type="GO" id="GO:0006695">
    <property type="term" value="P:cholesterol biosynthetic process"/>
    <property type="evidence" value="ECO:0000266"/>
    <property type="project" value="RGD"/>
</dbReference>
<dbReference type="GO" id="GO:0030301">
    <property type="term" value="P:cholesterol transport"/>
    <property type="evidence" value="ECO:0000266"/>
    <property type="project" value="RGD"/>
</dbReference>
<dbReference type="GO" id="GO:0070166">
    <property type="term" value="P:enamel mineralization"/>
    <property type="evidence" value="ECO:0000315"/>
    <property type="project" value="RGD"/>
</dbReference>
<dbReference type="GO" id="GO:0051649">
    <property type="term" value="P:establishment of localization in cell"/>
    <property type="evidence" value="ECO:0000266"/>
    <property type="project" value="RGD"/>
</dbReference>
<dbReference type="GO" id="GO:0051454">
    <property type="term" value="P:intracellular pH elevation"/>
    <property type="evidence" value="ECO:0000250"/>
    <property type="project" value="UniProtKB"/>
</dbReference>
<dbReference type="GO" id="GO:0097421">
    <property type="term" value="P:liver regeneration"/>
    <property type="evidence" value="ECO:0000270"/>
    <property type="project" value="RGD"/>
</dbReference>
<dbReference type="GO" id="GO:0030324">
    <property type="term" value="P:lung development"/>
    <property type="evidence" value="ECO:0000315"/>
    <property type="project" value="RGD"/>
</dbReference>
<dbReference type="GO" id="GO:0060081">
    <property type="term" value="P:membrane hyperpolarization"/>
    <property type="evidence" value="ECO:0000250"/>
    <property type="project" value="UniProtKB"/>
</dbReference>
<dbReference type="GO" id="GO:0050891">
    <property type="term" value="P:multicellular organismal-level water homeostasis"/>
    <property type="evidence" value="ECO:0000250"/>
    <property type="project" value="UniProtKB"/>
</dbReference>
<dbReference type="GO" id="GO:2000077">
    <property type="term" value="P:negative regulation of type B pancreatic cell development"/>
    <property type="evidence" value="ECO:0000315"/>
    <property type="project" value="RGD"/>
</dbReference>
<dbReference type="GO" id="GO:1905460">
    <property type="term" value="P:negative regulation of vascular associated smooth muscle cell apoptotic process"/>
    <property type="evidence" value="ECO:0000315"/>
    <property type="project" value="RGD"/>
</dbReference>
<dbReference type="GO" id="GO:0070175">
    <property type="term" value="P:positive regulation of enamel mineralization"/>
    <property type="evidence" value="ECO:0000266"/>
    <property type="project" value="RGD"/>
</dbReference>
<dbReference type="GO" id="GO:1904446">
    <property type="term" value="P:positive regulation of establishment of Sertoli cell barrier"/>
    <property type="evidence" value="ECO:0000315"/>
    <property type="project" value="RGD"/>
</dbReference>
<dbReference type="GO" id="GO:0045921">
    <property type="term" value="P:positive regulation of exocytosis"/>
    <property type="evidence" value="ECO:0000266"/>
    <property type="project" value="RGD"/>
</dbReference>
<dbReference type="GO" id="GO:0035774">
    <property type="term" value="P:positive regulation of insulin secretion involved in cellular response to glucose stimulus"/>
    <property type="evidence" value="ECO:0000266"/>
    <property type="project" value="RGD"/>
</dbReference>
<dbReference type="GO" id="GO:0033005">
    <property type="term" value="P:positive regulation of mast cell activation"/>
    <property type="evidence" value="ECO:0000315"/>
    <property type="project" value="RGD"/>
</dbReference>
<dbReference type="GO" id="GO:0034097">
    <property type="term" value="P:response to cytokine"/>
    <property type="evidence" value="ECO:0000270"/>
    <property type="project" value="RGD"/>
</dbReference>
<dbReference type="GO" id="GO:0034976">
    <property type="term" value="P:response to endoplasmic reticulum stress"/>
    <property type="evidence" value="ECO:0000250"/>
    <property type="project" value="UniProtKB"/>
</dbReference>
<dbReference type="GO" id="GO:0043627">
    <property type="term" value="P:response to estrogen"/>
    <property type="evidence" value="ECO:0000270"/>
    <property type="project" value="RGD"/>
</dbReference>
<dbReference type="GO" id="GO:0043434">
    <property type="term" value="P:response to peptide hormone"/>
    <property type="evidence" value="ECO:0000270"/>
    <property type="project" value="RGD"/>
</dbReference>
<dbReference type="GO" id="GO:0009410">
    <property type="term" value="P:response to xenobiotic stimulus"/>
    <property type="evidence" value="ECO:0000315"/>
    <property type="project" value="RGD"/>
</dbReference>
<dbReference type="GO" id="GO:0035725">
    <property type="term" value="P:sodium ion transmembrane transport"/>
    <property type="evidence" value="ECO:0000315"/>
    <property type="project" value="RGD"/>
</dbReference>
<dbReference type="GO" id="GO:0048240">
    <property type="term" value="P:sperm capacitation"/>
    <property type="evidence" value="ECO:0000250"/>
    <property type="project" value="UniProtKB"/>
</dbReference>
<dbReference type="GO" id="GO:0030321">
    <property type="term" value="P:transepithelial chloride transport"/>
    <property type="evidence" value="ECO:0000315"/>
    <property type="project" value="RGD"/>
</dbReference>
<dbReference type="GO" id="GO:0035377">
    <property type="term" value="P:transepithelial water transport"/>
    <property type="evidence" value="ECO:0000250"/>
    <property type="project" value="UniProtKB"/>
</dbReference>
<dbReference type="GO" id="GO:0042311">
    <property type="term" value="P:vasodilation"/>
    <property type="evidence" value="ECO:0000314"/>
    <property type="project" value="RGD"/>
</dbReference>
<dbReference type="GO" id="GO:0006904">
    <property type="term" value="P:vesicle docking involved in exocytosis"/>
    <property type="evidence" value="ECO:0000266"/>
    <property type="project" value="RGD"/>
</dbReference>
<dbReference type="GO" id="GO:0006833">
    <property type="term" value="P:water transport"/>
    <property type="evidence" value="ECO:0000315"/>
    <property type="project" value="RGD"/>
</dbReference>
<dbReference type="CDD" id="cd03291">
    <property type="entry name" value="ABCC_CFTR1"/>
    <property type="match status" value="1"/>
</dbReference>
<dbReference type="FunFam" id="1.20.1560.10:FF:000017">
    <property type="entry name" value="Cystic fibrosis transmembrane conductance regulator"/>
    <property type="match status" value="1"/>
</dbReference>
<dbReference type="FunFam" id="1.20.1560.10:FF:000019">
    <property type="entry name" value="Cystic fibrosis transmembrane conductance regulator"/>
    <property type="match status" value="1"/>
</dbReference>
<dbReference type="FunFam" id="3.40.50.300:FF:000581">
    <property type="entry name" value="Cystic fibrosis transmembrane conductance regulator"/>
    <property type="match status" value="1"/>
</dbReference>
<dbReference type="FunFam" id="3.40.50.300:FF:000591">
    <property type="entry name" value="Cystic fibrosis transmembrane conductance regulator"/>
    <property type="match status" value="1"/>
</dbReference>
<dbReference type="Gene3D" id="1.20.1560.10">
    <property type="entry name" value="ABC transporter type 1, transmembrane domain"/>
    <property type="match status" value="2"/>
</dbReference>
<dbReference type="Gene3D" id="3.40.50.300">
    <property type="entry name" value="P-loop containing nucleotide triphosphate hydrolases"/>
    <property type="match status" value="2"/>
</dbReference>
<dbReference type="InterPro" id="IPR003593">
    <property type="entry name" value="AAA+_ATPase"/>
</dbReference>
<dbReference type="InterPro" id="IPR011527">
    <property type="entry name" value="ABC1_TM_dom"/>
</dbReference>
<dbReference type="InterPro" id="IPR036640">
    <property type="entry name" value="ABC1_TM_sf"/>
</dbReference>
<dbReference type="InterPro" id="IPR003439">
    <property type="entry name" value="ABC_transporter-like_ATP-bd"/>
</dbReference>
<dbReference type="InterPro" id="IPR017871">
    <property type="entry name" value="ABC_transporter-like_CS"/>
</dbReference>
<dbReference type="InterPro" id="IPR050173">
    <property type="entry name" value="ABC_transporter_C-like"/>
</dbReference>
<dbReference type="InterPro" id="IPR009147">
    <property type="entry name" value="CFTR/ABCC7"/>
</dbReference>
<dbReference type="InterPro" id="IPR047082">
    <property type="entry name" value="CFTR1_ATP-bd_dom1"/>
</dbReference>
<dbReference type="InterPro" id="IPR025837">
    <property type="entry name" value="CFTR_reg_dom"/>
</dbReference>
<dbReference type="InterPro" id="IPR027417">
    <property type="entry name" value="P-loop_NTPase"/>
</dbReference>
<dbReference type="NCBIfam" id="TIGR01271">
    <property type="entry name" value="CFTR_protein"/>
    <property type="match status" value="1"/>
</dbReference>
<dbReference type="PANTHER" id="PTHR24223">
    <property type="entry name" value="ATP-BINDING CASSETTE SUB-FAMILY C"/>
    <property type="match status" value="1"/>
</dbReference>
<dbReference type="PANTHER" id="PTHR24223:SF19">
    <property type="entry name" value="CYSTIC FIBROSIS TRANSMEMBRANE CONDUCTANCE REGULATOR"/>
    <property type="match status" value="1"/>
</dbReference>
<dbReference type="Pfam" id="PF00664">
    <property type="entry name" value="ABC_membrane"/>
    <property type="match status" value="2"/>
</dbReference>
<dbReference type="Pfam" id="PF00005">
    <property type="entry name" value="ABC_tran"/>
    <property type="match status" value="2"/>
</dbReference>
<dbReference type="Pfam" id="PF14396">
    <property type="entry name" value="CFTR_R"/>
    <property type="match status" value="1"/>
</dbReference>
<dbReference type="PRINTS" id="PR01851">
    <property type="entry name" value="CYSFIBREGLTR"/>
</dbReference>
<dbReference type="SMART" id="SM00382">
    <property type="entry name" value="AAA"/>
    <property type="match status" value="2"/>
</dbReference>
<dbReference type="SUPFAM" id="SSF90123">
    <property type="entry name" value="ABC transporter transmembrane region"/>
    <property type="match status" value="2"/>
</dbReference>
<dbReference type="SUPFAM" id="SSF52540">
    <property type="entry name" value="P-loop containing nucleoside triphosphate hydrolases"/>
    <property type="match status" value="2"/>
</dbReference>
<dbReference type="PROSITE" id="PS50929">
    <property type="entry name" value="ABC_TM1F"/>
    <property type="match status" value="2"/>
</dbReference>
<dbReference type="PROSITE" id="PS00211">
    <property type="entry name" value="ABC_TRANSPORTER_1"/>
    <property type="match status" value="1"/>
</dbReference>
<dbReference type="PROSITE" id="PS50893">
    <property type="entry name" value="ABC_TRANSPORTER_2"/>
    <property type="match status" value="2"/>
</dbReference>
<gene>
    <name evidence="13" type="primary">Cftr</name>
    <name type="synonym">Abcc7</name>
</gene>
<organism>
    <name type="scientific">Rattus norvegicus</name>
    <name type="common">Rat</name>
    <dbReference type="NCBI Taxonomy" id="10116"/>
    <lineage>
        <taxon>Eukaryota</taxon>
        <taxon>Metazoa</taxon>
        <taxon>Chordata</taxon>
        <taxon>Craniata</taxon>
        <taxon>Vertebrata</taxon>
        <taxon>Euteleostomi</taxon>
        <taxon>Mammalia</taxon>
        <taxon>Eutheria</taxon>
        <taxon>Euarchontoglires</taxon>
        <taxon>Glires</taxon>
        <taxon>Rodentia</taxon>
        <taxon>Myomorpha</taxon>
        <taxon>Muroidea</taxon>
        <taxon>Muridae</taxon>
        <taxon>Murinae</taxon>
        <taxon>Rattus</taxon>
    </lineage>
</organism>
<evidence type="ECO:0000250" key="1">
    <source>
        <dbReference type="UniProtKB" id="P13569"/>
    </source>
</evidence>
<evidence type="ECO:0000250" key="2">
    <source>
        <dbReference type="UniProtKB" id="P26361"/>
    </source>
</evidence>
<evidence type="ECO:0000255" key="3"/>
<evidence type="ECO:0000255" key="4">
    <source>
        <dbReference type="PROSITE-ProRule" id="PRU00434"/>
    </source>
</evidence>
<evidence type="ECO:0000255" key="5">
    <source>
        <dbReference type="PROSITE-ProRule" id="PRU00441"/>
    </source>
</evidence>
<evidence type="ECO:0000256" key="6">
    <source>
        <dbReference type="SAM" id="MobiDB-lite"/>
    </source>
</evidence>
<evidence type="ECO:0000269" key="7">
    <source>
    </source>
</evidence>
<evidence type="ECO:0000269" key="8">
    <source>
    </source>
</evidence>
<evidence type="ECO:0000269" key="9">
    <source>
    </source>
</evidence>
<evidence type="ECO:0000269" key="10">
    <source>
    </source>
</evidence>
<evidence type="ECO:0000269" key="11">
    <source>
    </source>
</evidence>
<evidence type="ECO:0000305" key="12"/>
<evidence type="ECO:0000312" key="13">
    <source>
        <dbReference type="RGD" id="2332"/>
    </source>
</evidence>
<evidence type="ECO:0007744" key="14">
    <source>
    </source>
</evidence>